<feature type="signal peptide" evidence="1">
    <location>
        <begin position="1"/>
        <end position="16"/>
    </location>
</feature>
<feature type="chain" id="PRO_5004185744" description="Protein dyf-4" evidence="1">
    <location>
        <begin position="17"/>
        <end position="383"/>
    </location>
</feature>
<feature type="glycosylation site" description="N-linked (GlcNAc...) asparagine" evidence="2">
    <location>
        <position position="64"/>
    </location>
</feature>
<feature type="mutagenesis site" description="Impairs localization to the sensory compartment and the protein accumulates in vesicular structures in both amphid and phasmid ciliated sensory neurons." evidence="3">
    <location>
        <begin position="1"/>
        <end position="16"/>
    </location>
</feature>
<feature type="mutagenesis site" description="In jhu431; ciliogenesis defects resulting in shorter cilia which lack distal segments with decreased levels of intraflagellar transports proteins osm-6, osm-5, che-11 and bbs-7 in cilia. Dendrite extension defects resulting in short phasmid dendrites and truncated amphid dendrites. Impairs localization to the sensory compartment in amphids and phasmids and the protein accumulates in glial cells." evidence="3">
    <original>C</original>
    <variation>Y</variation>
    <location>
        <position position="366"/>
    </location>
</feature>
<organism evidence="5">
    <name type="scientific">Caenorhabditis elegans</name>
    <dbReference type="NCBI Taxonomy" id="6239"/>
    <lineage>
        <taxon>Eukaryota</taxon>
        <taxon>Metazoa</taxon>
        <taxon>Ecdysozoa</taxon>
        <taxon>Nematoda</taxon>
        <taxon>Chromadorea</taxon>
        <taxon>Rhabditida</taxon>
        <taxon>Rhabditina</taxon>
        <taxon>Rhabditomorpha</taxon>
        <taxon>Rhabditoidea</taxon>
        <taxon>Rhabditidae</taxon>
        <taxon>Peloderinae</taxon>
        <taxon>Caenorhabditis</taxon>
    </lineage>
</organism>
<dbReference type="EMBL" id="BX284605">
    <property type="protein sequence ID" value="CAB01125.3"/>
    <property type="molecule type" value="Genomic_DNA"/>
</dbReference>
<dbReference type="PIR" id="T19230">
    <property type="entry name" value="T19230"/>
</dbReference>
<dbReference type="RefSeq" id="NP_506139.3">
    <property type="nucleotide sequence ID" value="NM_073738.7"/>
</dbReference>
<dbReference type="FunCoup" id="Q17944">
    <property type="interactions" value="123"/>
</dbReference>
<dbReference type="STRING" id="6239.C13C12.2.1"/>
<dbReference type="GlyCosmos" id="Q17944">
    <property type="glycosylation" value="1 site, No reported glycans"/>
</dbReference>
<dbReference type="PaxDb" id="6239-C13C12.2"/>
<dbReference type="PeptideAtlas" id="Q17944"/>
<dbReference type="EnsemblMetazoa" id="C13C12.2.1">
    <property type="protein sequence ID" value="C13C12.2.1"/>
    <property type="gene ID" value="WBGene00007552"/>
</dbReference>
<dbReference type="EnsemblMetazoa" id="C13C12.2.2">
    <property type="protein sequence ID" value="C13C12.2.2"/>
    <property type="gene ID" value="WBGene00007552"/>
</dbReference>
<dbReference type="EnsemblMetazoa" id="C13C12.2.3">
    <property type="protein sequence ID" value="C13C12.2.3"/>
    <property type="gene ID" value="WBGene00007552"/>
</dbReference>
<dbReference type="GeneID" id="182568"/>
<dbReference type="KEGG" id="cel:CELE_C13C12.2"/>
<dbReference type="UCSC" id="C13C12.2">
    <property type="organism name" value="c. elegans"/>
</dbReference>
<dbReference type="AGR" id="WB:WBGene00007552"/>
<dbReference type="CTD" id="182568"/>
<dbReference type="WormBase" id="C13C12.2">
    <property type="protein sequence ID" value="CE41198"/>
    <property type="gene ID" value="WBGene00007552"/>
    <property type="gene designation" value="dyf-4"/>
</dbReference>
<dbReference type="eggNOG" id="ENOG502RY84">
    <property type="taxonomic scope" value="Eukaryota"/>
</dbReference>
<dbReference type="HOGENOM" id="CLU_061040_0_0_1"/>
<dbReference type="InParanoid" id="Q17944"/>
<dbReference type="OMA" id="RYCTIFW"/>
<dbReference type="OrthoDB" id="5916685at2759"/>
<dbReference type="PRO" id="PR:Q17944"/>
<dbReference type="Proteomes" id="UP000001940">
    <property type="component" value="Chromosome V"/>
</dbReference>
<dbReference type="Bgee" id="WBGene00007552">
    <property type="expression patterns" value="Expressed in embryo and 3 other cell types or tissues"/>
</dbReference>
<dbReference type="GO" id="GO:0005576">
    <property type="term" value="C:extracellular region"/>
    <property type="evidence" value="ECO:0007669"/>
    <property type="project" value="UniProtKB-SubCell"/>
</dbReference>
<keyword id="KW-0325">Glycoprotein</keyword>
<keyword id="KW-1185">Reference proteome</keyword>
<keyword id="KW-0964">Secreted</keyword>
<keyword id="KW-0732">Signal</keyword>
<sequence length="383" mass="44126">MKTIWLLLATCIHVFAHDELYILIDEVSLYNCRGVKNEITVKEEDVQIVNERGNRVYYIRAPGNYSLDFKKIKVKQNFGFLAGEIGVTLQVPVLEGPAGIRFDLPYTMVPETTLLSQKCDDFSGVIERNGRTYCRYCDLCHVSQAVENELASGRHQFLSQSENDTPISKCYNIESNEYDFRRTIQLPSRSQLEGLIRSKAQGIDDEIKKRLNKGRGRFQVFLNLITSDKPAISLNRWMAGSKDCECCFNRNAPHCDSLSYLYCNMEDCKTGWALQCLHKSAKVAACYTVEFNYRMTTSYSDVLEFLRENNYPNQDSQYTQPNQPLVPTTRRPVTPSFEARQANQLQMTQACVESMPSRMTHLKRYCTIFWNEKLCCEHCPDIC</sequence>
<accession>Q17944</accession>
<evidence type="ECO:0000255" key="1"/>
<evidence type="ECO:0000255" key="2">
    <source>
        <dbReference type="PROSITE-ProRule" id="PRU00498"/>
    </source>
</evidence>
<evidence type="ECO:0000269" key="3">
    <source>
    </source>
</evidence>
<evidence type="ECO:0000305" key="4"/>
<evidence type="ECO:0000312" key="5">
    <source>
        <dbReference type="Proteomes" id="UP000001940"/>
    </source>
</evidence>
<evidence type="ECO:0000312" key="6">
    <source>
        <dbReference type="WormBase" id="C13C12.2"/>
    </source>
</evidence>
<reference evidence="5" key="1">
    <citation type="journal article" date="1998" name="Science">
        <title>Genome sequence of the nematode C. elegans: a platform for investigating biology.</title>
        <authorList>
            <consortium name="The C. elegans sequencing consortium"/>
        </authorList>
    </citation>
    <scope>NUCLEOTIDE SEQUENCE [LARGE SCALE GENOMIC DNA]</scope>
    <source>
        <strain evidence="5">Bristol N2</strain>
    </source>
</reference>
<reference evidence="4" key="2">
    <citation type="journal article" date="2021" name="PLoS Genet.">
        <title>DYF-4 regulates patched-related/DAF-6-mediated sensory compartment formation in C. elegans.</title>
        <authorList>
            <person name="Hong H."/>
            <person name="Chen H."/>
            <person name="Zhang Y."/>
            <person name="Wu Z."/>
            <person name="Zhang Y."/>
            <person name="Zhang Y."/>
            <person name="Hu Z."/>
            <person name="Zhang J.V."/>
            <person name="Ling K."/>
            <person name="Hu J."/>
            <person name="Wei Q."/>
        </authorList>
    </citation>
    <scope>FUNCTION</scope>
    <scope>INTERACTION WITH DAF-6</scope>
    <scope>SUBCELLULAR LOCATION</scope>
    <scope>TISSUE SPECIFICITY</scope>
    <scope>DEVELOPMENTAL STAGE</scope>
    <scope>MUTAGENESIS OF 1-MET--ALA-16 AND CYS-366</scope>
</reference>
<protein>
    <recommendedName>
        <fullName evidence="4">Protein dyf-4</fullName>
    </recommendedName>
    <alternativeName>
        <fullName evidence="4">Abnormal dye filling protein 4</fullName>
    </alternativeName>
</protein>
<comment type="function">
    <text evidence="3">Required for the localization of daf-6 to the socket glial channel and the sheath lumen (PubMed:34115759). In association with daf-6, plays a role in dendrite extension and ciliogenesis to ensure the formation of glial channels in amphid and phasmid ciliated sensory neurons (PubMed:34115759).</text>
</comment>
<comment type="subunit">
    <text evidence="3">Interacts with daf-6.</text>
</comment>
<comment type="subcellular location">
    <subcellularLocation>
        <location evidence="3">Secreted</location>
    </subcellularLocation>
    <text evidence="3">Secreted into the sensory compartment region in both amphids and phasmids.</text>
</comment>
<comment type="tissue specificity">
    <text evidence="3">Expressed in sheath and socket glial cells in both the amphid and phasmid ciliated sensory neurons (at protein level).</text>
</comment>
<comment type="developmental stage">
    <text evidence="3">Expressed in early developing glial cells of the embryo and accumulates between the embryo and the eggshell.</text>
</comment>
<name>DYF4_CAEEL</name>
<proteinExistence type="evidence at protein level"/>
<gene>
    <name evidence="6" type="primary">dyf-4</name>
    <name evidence="6" type="ORF">C13C12.2</name>
</gene>